<organism>
    <name type="scientific">Baumannia cicadellinicola subsp. Homalodisca coagulata</name>
    <dbReference type="NCBI Taxonomy" id="374463"/>
    <lineage>
        <taxon>Bacteria</taxon>
        <taxon>Pseudomonadati</taxon>
        <taxon>Pseudomonadota</taxon>
        <taxon>Gammaproteobacteria</taxon>
        <taxon>Candidatus Palibaumannia</taxon>
    </lineage>
</organism>
<comment type="function">
    <text evidence="1">Specifically methylates guanosine-37 in various tRNAs.</text>
</comment>
<comment type="catalytic activity">
    <reaction evidence="1">
        <text>guanosine(37) in tRNA + S-adenosyl-L-methionine = N(1)-methylguanosine(37) in tRNA + S-adenosyl-L-homocysteine + H(+)</text>
        <dbReference type="Rhea" id="RHEA:36899"/>
        <dbReference type="Rhea" id="RHEA-COMP:10145"/>
        <dbReference type="Rhea" id="RHEA-COMP:10147"/>
        <dbReference type="ChEBI" id="CHEBI:15378"/>
        <dbReference type="ChEBI" id="CHEBI:57856"/>
        <dbReference type="ChEBI" id="CHEBI:59789"/>
        <dbReference type="ChEBI" id="CHEBI:73542"/>
        <dbReference type="ChEBI" id="CHEBI:74269"/>
        <dbReference type="EC" id="2.1.1.228"/>
    </reaction>
</comment>
<comment type="subunit">
    <text evidence="1">Homodimer.</text>
</comment>
<comment type="subcellular location">
    <subcellularLocation>
        <location evidence="1">Cytoplasm</location>
    </subcellularLocation>
</comment>
<comment type="similarity">
    <text evidence="1">Belongs to the RNA methyltransferase TrmD family.</text>
</comment>
<sequence>MWIGLISIFPDMFRAVMDYGVTGRAVKKGLLQVHCWNPRAFSHNRHQTVDDRPYGGGPGMLLMMQPLRDAIHEAKNHTETGVKVIYLSPQGRKLDQQGVYELAANKKLILICGRYKGIDERLITTEIDEEWSIGDYVLSGGELAAMILIDSMTRLIPGALSHESSAVEDSFAQGLLDCPHYTRPEVLYGIKVPPVLLSGHHANIRRWRLKQSLGRTWLRRPELLNNLYLTHEQVRLLKEFQYEYNNLIESQV</sequence>
<name>TRMD_BAUCH</name>
<reference key="1">
    <citation type="journal article" date="2006" name="PLoS Biol.">
        <title>Metabolic complementarity and genomics of the dual bacterial symbiosis of sharpshooters.</title>
        <authorList>
            <person name="Wu D."/>
            <person name="Daugherty S.C."/>
            <person name="Van Aken S.E."/>
            <person name="Pai G.H."/>
            <person name="Watkins K.L."/>
            <person name="Khouri H."/>
            <person name="Tallon L.J."/>
            <person name="Zaborsky J.M."/>
            <person name="Dunbar H.E."/>
            <person name="Tran P.L."/>
            <person name="Moran N.A."/>
            <person name="Eisen J.A."/>
        </authorList>
    </citation>
    <scope>NUCLEOTIDE SEQUENCE [LARGE SCALE GENOMIC DNA]</scope>
</reference>
<evidence type="ECO:0000255" key="1">
    <source>
        <dbReference type="HAMAP-Rule" id="MF_00605"/>
    </source>
</evidence>
<keyword id="KW-0963">Cytoplasm</keyword>
<keyword id="KW-0489">Methyltransferase</keyword>
<keyword id="KW-1185">Reference proteome</keyword>
<keyword id="KW-0949">S-adenosyl-L-methionine</keyword>
<keyword id="KW-0808">Transferase</keyword>
<keyword id="KW-0819">tRNA processing</keyword>
<gene>
    <name evidence="1" type="primary">trmD</name>
    <name type="ordered locus">BCI_0196</name>
</gene>
<protein>
    <recommendedName>
        <fullName evidence="1">tRNA (guanine-N(1)-)-methyltransferase</fullName>
        <ecNumber evidence="1">2.1.1.228</ecNumber>
    </recommendedName>
    <alternativeName>
        <fullName evidence="1">M1G-methyltransferase</fullName>
    </alternativeName>
    <alternativeName>
        <fullName evidence="1">tRNA [GM37] methyltransferase</fullName>
    </alternativeName>
</protein>
<feature type="chain" id="PRO_0000257391" description="tRNA (guanine-N(1)-)-methyltransferase">
    <location>
        <begin position="1"/>
        <end position="252"/>
    </location>
</feature>
<feature type="binding site" evidence="1">
    <location>
        <position position="113"/>
    </location>
    <ligand>
        <name>S-adenosyl-L-methionine</name>
        <dbReference type="ChEBI" id="CHEBI:59789"/>
    </ligand>
</feature>
<feature type="binding site" evidence="1">
    <location>
        <begin position="133"/>
        <end position="138"/>
    </location>
    <ligand>
        <name>S-adenosyl-L-methionine</name>
        <dbReference type="ChEBI" id="CHEBI:59789"/>
    </ligand>
</feature>
<dbReference type="EC" id="2.1.1.228" evidence="1"/>
<dbReference type="EMBL" id="CP000238">
    <property type="protein sequence ID" value="ABF13796.1"/>
    <property type="molecule type" value="Genomic_DNA"/>
</dbReference>
<dbReference type="RefSeq" id="WP_011520386.1">
    <property type="nucleotide sequence ID" value="NC_007984.1"/>
</dbReference>
<dbReference type="SMR" id="Q1LTR1"/>
<dbReference type="STRING" id="374463.BCI_0196"/>
<dbReference type="KEGG" id="bci:BCI_0196"/>
<dbReference type="HOGENOM" id="CLU_047363_0_1_6"/>
<dbReference type="OrthoDB" id="9807416at2"/>
<dbReference type="Proteomes" id="UP000002427">
    <property type="component" value="Chromosome"/>
</dbReference>
<dbReference type="GO" id="GO:0005829">
    <property type="term" value="C:cytosol"/>
    <property type="evidence" value="ECO:0007669"/>
    <property type="project" value="TreeGrafter"/>
</dbReference>
<dbReference type="GO" id="GO:0052906">
    <property type="term" value="F:tRNA (guanine(37)-N1)-methyltransferase activity"/>
    <property type="evidence" value="ECO:0007669"/>
    <property type="project" value="UniProtKB-UniRule"/>
</dbReference>
<dbReference type="GO" id="GO:0002939">
    <property type="term" value="P:tRNA N1-guanine methylation"/>
    <property type="evidence" value="ECO:0007669"/>
    <property type="project" value="TreeGrafter"/>
</dbReference>
<dbReference type="CDD" id="cd18080">
    <property type="entry name" value="TrmD-like"/>
    <property type="match status" value="1"/>
</dbReference>
<dbReference type="FunFam" id="1.10.1270.20:FF:000001">
    <property type="entry name" value="tRNA (guanine-N(1)-)-methyltransferase"/>
    <property type="match status" value="1"/>
</dbReference>
<dbReference type="FunFam" id="3.40.1280.10:FF:000001">
    <property type="entry name" value="tRNA (guanine-N(1)-)-methyltransferase"/>
    <property type="match status" value="1"/>
</dbReference>
<dbReference type="Gene3D" id="3.40.1280.10">
    <property type="match status" value="1"/>
</dbReference>
<dbReference type="Gene3D" id="1.10.1270.20">
    <property type="entry name" value="tRNA(m1g37)methyltransferase, domain 2"/>
    <property type="match status" value="1"/>
</dbReference>
<dbReference type="HAMAP" id="MF_00605">
    <property type="entry name" value="TrmD"/>
    <property type="match status" value="1"/>
</dbReference>
<dbReference type="InterPro" id="IPR029028">
    <property type="entry name" value="Alpha/beta_knot_MTases"/>
</dbReference>
<dbReference type="InterPro" id="IPR023148">
    <property type="entry name" value="tRNA_m1G_MeTrfase_C_sf"/>
</dbReference>
<dbReference type="InterPro" id="IPR002649">
    <property type="entry name" value="tRNA_m1G_MeTrfase_TrmD"/>
</dbReference>
<dbReference type="InterPro" id="IPR029026">
    <property type="entry name" value="tRNA_m1G_MTases_N"/>
</dbReference>
<dbReference type="InterPro" id="IPR016009">
    <property type="entry name" value="tRNA_MeTrfase_TRMD/TRM10"/>
</dbReference>
<dbReference type="NCBIfam" id="NF000648">
    <property type="entry name" value="PRK00026.1"/>
    <property type="match status" value="1"/>
</dbReference>
<dbReference type="NCBIfam" id="TIGR00088">
    <property type="entry name" value="trmD"/>
    <property type="match status" value="1"/>
</dbReference>
<dbReference type="PANTHER" id="PTHR46417">
    <property type="entry name" value="TRNA (GUANINE-N(1)-)-METHYLTRANSFERASE"/>
    <property type="match status" value="1"/>
</dbReference>
<dbReference type="PANTHER" id="PTHR46417:SF1">
    <property type="entry name" value="TRNA (GUANINE-N(1)-)-METHYLTRANSFERASE"/>
    <property type="match status" value="1"/>
</dbReference>
<dbReference type="Pfam" id="PF01746">
    <property type="entry name" value="tRNA_m1G_MT"/>
    <property type="match status" value="1"/>
</dbReference>
<dbReference type="PIRSF" id="PIRSF000386">
    <property type="entry name" value="tRNA_mtase"/>
    <property type="match status" value="1"/>
</dbReference>
<dbReference type="SUPFAM" id="SSF75217">
    <property type="entry name" value="alpha/beta knot"/>
    <property type="match status" value="1"/>
</dbReference>
<accession>Q1LTR1</accession>
<proteinExistence type="inferred from homology"/>